<keyword id="KW-1185">Reference proteome</keyword>
<keyword id="KW-0687">Ribonucleoprotein</keyword>
<keyword id="KW-0689">Ribosomal protein</keyword>
<comment type="similarity">
    <text evidence="2">Belongs to the eukaryotic ribosomal protein eS25 family.</text>
</comment>
<protein>
    <recommendedName>
        <fullName evidence="2">Small ribosomal subunit protein eS25</fullName>
    </recommendedName>
    <alternativeName>
        <fullName>30S ribosomal protein S25e</fullName>
    </alternativeName>
</protein>
<gene>
    <name type="primary">rps25e</name>
    <name type="ordered locus">APE_2470</name>
</gene>
<accession>Q9Y914</accession>
<organism>
    <name type="scientific">Aeropyrum pernix (strain ATCC 700893 / DSM 11879 / JCM 9820 / NBRC 100138 / K1)</name>
    <dbReference type="NCBI Taxonomy" id="272557"/>
    <lineage>
        <taxon>Archaea</taxon>
        <taxon>Thermoproteota</taxon>
        <taxon>Thermoprotei</taxon>
        <taxon>Desulfurococcales</taxon>
        <taxon>Desulfurococcaceae</taxon>
        <taxon>Aeropyrum</taxon>
    </lineage>
</organism>
<reference key="1">
    <citation type="journal article" date="1999" name="DNA Res.">
        <title>Complete genome sequence of an aerobic hyper-thermophilic crenarchaeon, Aeropyrum pernix K1.</title>
        <authorList>
            <person name="Kawarabayasi Y."/>
            <person name="Hino Y."/>
            <person name="Horikawa H."/>
            <person name="Yamazaki S."/>
            <person name="Haikawa Y."/>
            <person name="Jin-no K."/>
            <person name="Takahashi M."/>
            <person name="Sekine M."/>
            <person name="Baba S."/>
            <person name="Ankai A."/>
            <person name="Kosugi H."/>
            <person name="Hosoyama A."/>
            <person name="Fukui S."/>
            <person name="Nagai Y."/>
            <person name="Nishijima K."/>
            <person name="Nakazawa H."/>
            <person name="Takamiya M."/>
            <person name="Masuda S."/>
            <person name="Funahashi T."/>
            <person name="Tanaka T."/>
            <person name="Kudoh Y."/>
            <person name="Yamazaki J."/>
            <person name="Kushida N."/>
            <person name="Oguchi A."/>
            <person name="Aoki K."/>
            <person name="Kubota K."/>
            <person name="Nakamura Y."/>
            <person name="Nomura N."/>
            <person name="Sako Y."/>
            <person name="Kikuchi H."/>
        </authorList>
    </citation>
    <scope>NUCLEOTIDE SEQUENCE [LARGE SCALE GENOMIC DNA]</scope>
    <source>
        <strain>ATCC 700893 / DSM 11879 / JCM 9820 / NBRC 100138 / K1</strain>
    </source>
</reference>
<name>RS25_AERPE</name>
<proteinExistence type="inferred from homology"/>
<feature type="chain" id="PRO_0000192891" description="Small ribosomal subunit protein eS25">
    <location>
        <begin position="1"/>
        <end position="103"/>
    </location>
</feature>
<feature type="region of interest" description="Disordered" evidence="1">
    <location>
        <begin position="1"/>
        <end position="23"/>
    </location>
</feature>
<evidence type="ECO:0000256" key="1">
    <source>
        <dbReference type="SAM" id="MobiDB-lite"/>
    </source>
</evidence>
<evidence type="ECO:0000305" key="2"/>
<sequence>MGGEDMAKKKAPSAKEGEKQQGFKEIIPEVTEKLVEQARKEVARERWVTPHKLAQKMGVKVSIARRVLRILEEEGVLVLFTRNRRSPLYLPKKKVPTAPPRGL</sequence>
<dbReference type="EMBL" id="BA000002">
    <property type="protein sequence ID" value="BAA81486.1"/>
    <property type="molecule type" value="Genomic_DNA"/>
</dbReference>
<dbReference type="PIR" id="F72478">
    <property type="entry name" value="F72478"/>
</dbReference>
<dbReference type="SMR" id="Q9Y914"/>
<dbReference type="STRING" id="272557.APE_2470"/>
<dbReference type="EnsemblBacteria" id="BAA81486">
    <property type="protein sequence ID" value="BAA81486"/>
    <property type="gene ID" value="APE_2470"/>
</dbReference>
<dbReference type="KEGG" id="ape:APE_2470"/>
<dbReference type="eggNOG" id="arCOG04327">
    <property type="taxonomic scope" value="Archaea"/>
</dbReference>
<dbReference type="Proteomes" id="UP000002518">
    <property type="component" value="Chromosome"/>
</dbReference>
<dbReference type="GO" id="GO:1990904">
    <property type="term" value="C:ribonucleoprotein complex"/>
    <property type="evidence" value="ECO:0007669"/>
    <property type="project" value="UniProtKB-KW"/>
</dbReference>
<dbReference type="GO" id="GO:0005840">
    <property type="term" value="C:ribosome"/>
    <property type="evidence" value="ECO:0007669"/>
    <property type="project" value="UniProtKB-KW"/>
</dbReference>
<dbReference type="Gene3D" id="1.10.10.10">
    <property type="entry name" value="Winged helix-like DNA-binding domain superfamily/Winged helix DNA-binding domain"/>
    <property type="match status" value="1"/>
</dbReference>
<dbReference type="InterPro" id="IPR004977">
    <property type="entry name" value="Ribosomal_eS25"/>
</dbReference>
<dbReference type="InterPro" id="IPR036388">
    <property type="entry name" value="WH-like_DNA-bd_sf"/>
</dbReference>
<dbReference type="InterPro" id="IPR036390">
    <property type="entry name" value="WH_DNA-bd_sf"/>
</dbReference>
<dbReference type="NCBIfam" id="NF006813">
    <property type="entry name" value="PRK09334.1-3"/>
    <property type="match status" value="1"/>
</dbReference>
<dbReference type="Pfam" id="PF03297">
    <property type="entry name" value="Ribosomal_S25"/>
    <property type="match status" value="1"/>
</dbReference>
<dbReference type="SUPFAM" id="SSF46785">
    <property type="entry name" value="Winged helix' DNA-binding domain"/>
    <property type="match status" value="1"/>
</dbReference>